<comment type="function">
    <text evidence="1">Channel that opens in response to stretch forces in the membrane lipid bilayer. May participate in the regulation of osmotic pressure changes within the cell.</text>
</comment>
<comment type="subunit">
    <text evidence="1">Homopentamer.</text>
</comment>
<comment type="subcellular location">
    <subcellularLocation>
        <location evidence="1">Cell inner membrane</location>
        <topology evidence="1">Multi-pass membrane protein</topology>
    </subcellularLocation>
</comment>
<comment type="similarity">
    <text evidence="1">Belongs to the MscL family.</text>
</comment>
<comment type="sequence caution" evidence="2">
    <conflict type="erroneous initiation">
        <sequence resource="EMBL-CDS" id="BAB51294"/>
    </conflict>
</comment>
<feature type="chain" id="PRO_0000238026" description="Large-conductance mechanosensitive channel 1">
    <location>
        <begin position="1"/>
        <end position="139"/>
    </location>
</feature>
<feature type="transmembrane region" description="Helical" evidence="1">
    <location>
        <begin position="8"/>
        <end position="28"/>
    </location>
</feature>
<feature type="transmembrane region" description="Helical" evidence="1">
    <location>
        <begin position="30"/>
        <end position="50"/>
    </location>
</feature>
<feature type="transmembrane region" description="Helical" evidence="1">
    <location>
        <begin position="81"/>
        <end position="101"/>
    </location>
</feature>
<dbReference type="EMBL" id="BA000012">
    <property type="protein sequence ID" value="BAB51294.1"/>
    <property type="status" value="ALT_INIT"/>
    <property type="molecule type" value="Genomic_DNA"/>
</dbReference>
<dbReference type="RefSeq" id="WP_044551069.1">
    <property type="nucleotide sequence ID" value="NC_002678.2"/>
</dbReference>
<dbReference type="SMR" id="Q98DH7"/>
<dbReference type="KEGG" id="mlo:mll4699"/>
<dbReference type="PATRIC" id="fig|266835.9.peg.3710"/>
<dbReference type="eggNOG" id="COG1970">
    <property type="taxonomic scope" value="Bacteria"/>
</dbReference>
<dbReference type="HOGENOM" id="CLU_095787_0_1_5"/>
<dbReference type="Proteomes" id="UP000000552">
    <property type="component" value="Chromosome"/>
</dbReference>
<dbReference type="GO" id="GO:0005886">
    <property type="term" value="C:plasma membrane"/>
    <property type="evidence" value="ECO:0007669"/>
    <property type="project" value="UniProtKB-SubCell"/>
</dbReference>
<dbReference type="GO" id="GO:0008381">
    <property type="term" value="F:mechanosensitive monoatomic ion channel activity"/>
    <property type="evidence" value="ECO:0007669"/>
    <property type="project" value="UniProtKB-UniRule"/>
</dbReference>
<dbReference type="Gene3D" id="1.10.1200.120">
    <property type="entry name" value="Large-conductance mechanosensitive channel, MscL, domain 1"/>
    <property type="match status" value="1"/>
</dbReference>
<dbReference type="HAMAP" id="MF_00115">
    <property type="entry name" value="MscL"/>
    <property type="match status" value="1"/>
</dbReference>
<dbReference type="InterPro" id="IPR019823">
    <property type="entry name" value="Mechanosensitive_channel_CS"/>
</dbReference>
<dbReference type="InterPro" id="IPR001185">
    <property type="entry name" value="MS_channel"/>
</dbReference>
<dbReference type="InterPro" id="IPR037673">
    <property type="entry name" value="MSC/AndL"/>
</dbReference>
<dbReference type="InterPro" id="IPR036019">
    <property type="entry name" value="MscL_channel"/>
</dbReference>
<dbReference type="NCBIfam" id="TIGR00220">
    <property type="entry name" value="mscL"/>
    <property type="match status" value="1"/>
</dbReference>
<dbReference type="NCBIfam" id="NF001843">
    <property type="entry name" value="PRK00567.1-4"/>
    <property type="match status" value="1"/>
</dbReference>
<dbReference type="NCBIfam" id="NF010557">
    <property type="entry name" value="PRK13952.1"/>
    <property type="match status" value="1"/>
</dbReference>
<dbReference type="PANTHER" id="PTHR30266:SF2">
    <property type="entry name" value="LARGE-CONDUCTANCE MECHANOSENSITIVE CHANNEL"/>
    <property type="match status" value="1"/>
</dbReference>
<dbReference type="PANTHER" id="PTHR30266">
    <property type="entry name" value="MECHANOSENSITIVE CHANNEL MSCL"/>
    <property type="match status" value="1"/>
</dbReference>
<dbReference type="Pfam" id="PF01741">
    <property type="entry name" value="MscL"/>
    <property type="match status" value="1"/>
</dbReference>
<dbReference type="PRINTS" id="PR01264">
    <property type="entry name" value="MECHCHANNEL"/>
</dbReference>
<dbReference type="SUPFAM" id="SSF81330">
    <property type="entry name" value="Gated mechanosensitive channel"/>
    <property type="match status" value="1"/>
</dbReference>
<dbReference type="PROSITE" id="PS01327">
    <property type="entry name" value="MSCL"/>
    <property type="match status" value="1"/>
</dbReference>
<gene>
    <name evidence="1" type="primary">mscL1</name>
    <name type="ordered locus">mll4699</name>
</gene>
<name>MSCL1_RHILO</name>
<evidence type="ECO:0000255" key="1">
    <source>
        <dbReference type="HAMAP-Rule" id="MF_00115"/>
    </source>
</evidence>
<evidence type="ECO:0000305" key="2"/>
<organism>
    <name type="scientific">Mesorhizobium japonicum (strain LMG 29417 / CECT 9101 / MAFF 303099)</name>
    <name type="common">Mesorhizobium loti (strain MAFF 303099)</name>
    <dbReference type="NCBI Taxonomy" id="266835"/>
    <lineage>
        <taxon>Bacteria</taxon>
        <taxon>Pseudomonadati</taxon>
        <taxon>Pseudomonadota</taxon>
        <taxon>Alphaproteobacteria</taxon>
        <taxon>Hyphomicrobiales</taxon>
        <taxon>Phyllobacteriaceae</taxon>
        <taxon>Mesorhizobium</taxon>
    </lineage>
</organism>
<reference key="1">
    <citation type="journal article" date="2000" name="DNA Res.">
        <title>Complete genome structure of the nitrogen-fixing symbiotic bacterium Mesorhizobium loti.</title>
        <authorList>
            <person name="Kaneko T."/>
            <person name="Nakamura Y."/>
            <person name="Sato S."/>
            <person name="Asamizu E."/>
            <person name="Kato T."/>
            <person name="Sasamoto S."/>
            <person name="Watanabe A."/>
            <person name="Idesawa K."/>
            <person name="Ishikawa A."/>
            <person name="Kawashima K."/>
            <person name="Kimura T."/>
            <person name="Kishida Y."/>
            <person name="Kiyokawa C."/>
            <person name="Kohara M."/>
            <person name="Matsumoto M."/>
            <person name="Matsuno A."/>
            <person name="Mochizuki Y."/>
            <person name="Nakayama S."/>
            <person name="Nakazaki N."/>
            <person name="Shimpo S."/>
            <person name="Sugimoto M."/>
            <person name="Takeuchi C."/>
            <person name="Yamada M."/>
            <person name="Tabata S."/>
        </authorList>
    </citation>
    <scope>NUCLEOTIDE SEQUENCE [LARGE SCALE GENOMIC DNA]</scope>
    <source>
        <strain>LMG 29417 / CECT 9101 / MAFF 303099</strain>
    </source>
</reference>
<accession>Q98DH7</accession>
<proteinExistence type="inferred from homology"/>
<protein>
    <recommendedName>
        <fullName evidence="1">Large-conductance mechanosensitive channel 1</fullName>
    </recommendedName>
</protein>
<keyword id="KW-0997">Cell inner membrane</keyword>
<keyword id="KW-1003">Cell membrane</keyword>
<keyword id="KW-0407">Ion channel</keyword>
<keyword id="KW-0406">Ion transport</keyword>
<keyword id="KW-0472">Membrane</keyword>
<keyword id="KW-0812">Transmembrane</keyword>
<keyword id="KW-1133">Transmembrane helix</keyword>
<keyword id="KW-0813">Transport</keyword>
<sequence>MLKEFQEFISKGNVMDLAVGVIIGAAFGKIVDSLVNDIIMPIIGAIFGGLDFNNYFVGLSSAVNATSLADARKQGAVLAYGSFITVALNFVILAFIIFLMVKAVNNLRKRLEREKPAAAAPPPADIALLTQIRDLLARK</sequence>